<gene>
    <name type="ordered locus">Atu2571</name>
    <name type="ORF">AGR_C_4658</name>
</gene>
<proteinExistence type="evidence at protein level"/>
<reference key="1">
    <citation type="journal article" date="2001" name="Science">
        <title>The genome of the natural genetic engineer Agrobacterium tumefaciens C58.</title>
        <authorList>
            <person name="Wood D.W."/>
            <person name="Setubal J.C."/>
            <person name="Kaul R."/>
            <person name="Monks D.E."/>
            <person name="Kitajima J.P."/>
            <person name="Okura V.K."/>
            <person name="Zhou Y."/>
            <person name="Chen L."/>
            <person name="Wood G.E."/>
            <person name="Almeida N.F. Jr."/>
            <person name="Woo L."/>
            <person name="Chen Y."/>
            <person name="Paulsen I.T."/>
            <person name="Eisen J.A."/>
            <person name="Karp P.D."/>
            <person name="Bovee D. Sr."/>
            <person name="Chapman P."/>
            <person name="Clendenning J."/>
            <person name="Deatherage G."/>
            <person name="Gillet W."/>
            <person name="Grant C."/>
            <person name="Kutyavin T."/>
            <person name="Levy R."/>
            <person name="Li M.-J."/>
            <person name="McClelland E."/>
            <person name="Palmieri A."/>
            <person name="Raymond C."/>
            <person name="Rouse G."/>
            <person name="Saenphimmachak C."/>
            <person name="Wu Z."/>
            <person name="Romero P."/>
            <person name="Gordon D."/>
            <person name="Zhang S."/>
            <person name="Yoo H."/>
            <person name="Tao Y."/>
            <person name="Biddle P."/>
            <person name="Jung M."/>
            <person name="Krespan W."/>
            <person name="Perry M."/>
            <person name="Gordon-Kamm B."/>
            <person name="Liao L."/>
            <person name="Kim S."/>
            <person name="Hendrick C."/>
            <person name="Zhao Z.-Y."/>
            <person name="Dolan M."/>
            <person name="Chumley F."/>
            <person name="Tingey S.V."/>
            <person name="Tomb J.-F."/>
            <person name="Gordon M.P."/>
            <person name="Olson M.V."/>
            <person name="Nester E.W."/>
        </authorList>
    </citation>
    <scope>NUCLEOTIDE SEQUENCE [LARGE SCALE GENOMIC DNA]</scope>
    <source>
        <strain>C58 / ATCC 33970</strain>
    </source>
</reference>
<reference key="2">
    <citation type="journal article" date="2001" name="Science">
        <title>Genome sequence of the plant pathogen and biotechnology agent Agrobacterium tumefaciens C58.</title>
        <authorList>
            <person name="Goodner B."/>
            <person name="Hinkle G."/>
            <person name="Gattung S."/>
            <person name="Miller N."/>
            <person name="Blanchard M."/>
            <person name="Qurollo B."/>
            <person name="Goldman B.S."/>
            <person name="Cao Y."/>
            <person name="Askenazi M."/>
            <person name="Halling C."/>
            <person name="Mullin L."/>
            <person name="Houmiel K."/>
            <person name="Gordon J."/>
            <person name="Vaudin M."/>
            <person name="Iartchouk O."/>
            <person name="Epp A."/>
            <person name="Liu F."/>
            <person name="Wollam C."/>
            <person name="Allinger M."/>
            <person name="Doughty D."/>
            <person name="Scott C."/>
            <person name="Lappas C."/>
            <person name="Markelz B."/>
            <person name="Flanagan C."/>
            <person name="Crowell C."/>
            <person name="Gurson J."/>
            <person name="Lomo C."/>
            <person name="Sear C."/>
            <person name="Strub G."/>
            <person name="Cielo C."/>
            <person name="Slater S."/>
        </authorList>
    </citation>
    <scope>NUCLEOTIDE SEQUENCE [LARGE SCALE GENOMIC DNA]</scope>
    <source>
        <strain>C58 / ATCC 33970</strain>
    </source>
</reference>
<reference key="3">
    <citation type="journal article" date="2010" name="Proc. Natl. Acad. Sci. U.S.A.">
        <title>Homologs of aminoacyl-tRNA synthetases acylate carrier proteins and provide a link between ribosomal and nonribosomal peptide synthesis.</title>
        <authorList>
            <person name="Mocibob M."/>
            <person name="Ivic N."/>
            <person name="Bilokapic S."/>
            <person name="Maier T."/>
            <person name="Luic M."/>
            <person name="Ban N."/>
            <person name="Weygand-Durasevic I."/>
        </authorList>
    </citation>
    <scope>FUNCTION AS A CARRIER PROTEIN</scope>
    <scope>PHOSPHOPANTETHEINYLATION</scope>
    <scope>PTM</scope>
    <scope>IDENTIFICATION BY MASS SPECTROMETRY</scope>
    <source>
        <strain>C58 / ATCC 33970</strain>
    </source>
</reference>
<reference key="4">
    <citation type="submission" date="2009-02" db="PDB data bank">
        <title>Solution structure of a protein (atc2521) of unknown function from Agrobacterium tumefaciens.</title>
        <authorList>
            <consortium name="Northeast structural genomics consortium (NESG)"/>
        </authorList>
    </citation>
    <scope>STRUCTURE BY NMR</scope>
</reference>
<comment type="function">
    <text evidence="2">Aminoacyl carrier protein. Can be charged with L-alanine, L-glycine or L-serine, via the formation of a thioester bond between the amino acid and the 4'-phosphopantetheinyl prosthetic group, catalyzed by the Atu2573 ligase.</text>
</comment>
<comment type="interaction">
    <interactant intactId="EBI-16043291">
        <id>A9CHM9</id>
    </interactant>
    <interactant intactId="EBI-16043272">
        <id>Q7CWR3</id>
        <label>Atu2573</label>
    </interactant>
    <organismsDiffer>false</organismsDiffer>
    <experiments>3</experiments>
</comment>
<comment type="PTM">
    <text>4'-phosphopantetheine is transferred from CoA to a specific serine of the apo-form of this carrier protein.</text>
</comment>
<sequence length="83" mass="8987">MNATIREILAKFGQLPTPVDTIADEADLYAAGLSSFASVQLMLGIEEAFDIEFPDNLLNRKSFASIKAIEDTVKLILDGKEAA</sequence>
<keyword id="KW-0002">3D-structure</keyword>
<keyword id="KW-0596">Phosphopantetheine</keyword>
<keyword id="KW-0597">Phosphoprotein</keyword>
<keyword id="KW-1185">Reference proteome</keyword>
<name>AACP_AGRFC</name>
<accession>A9CHM9</accession>
<feature type="chain" id="PRO_0000401191" description="Aminoacyl carrier protein">
    <location>
        <begin position="1"/>
        <end position="83"/>
    </location>
</feature>
<feature type="domain" description="Carrier" evidence="1">
    <location>
        <begin position="1"/>
        <end position="80"/>
    </location>
</feature>
<feature type="modified residue" description="O-(pantetheine 4'-phosphoryl)serine" evidence="1">
    <location>
        <position position="35"/>
    </location>
</feature>
<feature type="helix" evidence="4">
    <location>
        <begin position="1"/>
        <end position="12"/>
    </location>
</feature>
<feature type="helix" evidence="4">
    <location>
        <begin position="19"/>
        <end position="21"/>
    </location>
</feature>
<feature type="strand" evidence="4">
    <location>
        <begin position="24"/>
        <end position="26"/>
    </location>
</feature>
<feature type="helix" evidence="4">
    <location>
        <begin position="28"/>
        <end position="31"/>
    </location>
</feature>
<feature type="helix" evidence="4">
    <location>
        <begin position="35"/>
        <end position="48"/>
    </location>
</feature>
<feature type="helix" evidence="5">
    <location>
        <begin position="55"/>
        <end position="57"/>
    </location>
</feature>
<feature type="helix" evidence="4">
    <location>
        <begin position="60"/>
        <end position="63"/>
    </location>
</feature>
<feature type="helix" evidence="4">
    <location>
        <begin position="66"/>
        <end position="74"/>
    </location>
</feature>
<feature type="helix" evidence="3">
    <location>
        <begin position="79"/>
        <end position="82"/>
    </location>
</feature>
<dbReference type="EMBL" id="AE007869">
    <property type="protein sequence ID" value="AAK88294.1"/>
    <property type="molecule type" value="Genomic_DNA"/>
</dbReference>
<dbReference type="PIR" id="AB2892">
    <property type="entry name" value="AB2892"/>
</dbReference>
<dbReference type="PIR" id="E97667">
    <property type="entry name" value="E97667"/>
</dbReference>
<dbReference type="RefSeq" id="NP_355509.1">
    <property type="nucleotide sequence ID" value="NC_003062.2"/>
</dbReference>
<dbReference type="RefSeq" id="WP_003504852.1">
    <property type="nucleotide sequence ID" value="NC_003062.2"/>
</dbReference>
<dbReference type="PDB" id="2JQ4">
    <property type="method" value="NMR"/>
    <property type="chains" value="A=1-83"/>
</dbReference>
<dbReference type="PDB" id="4H2W">
    <property type="method" value="X-ray"/>
    <property type="resolution" value="1.95 A"/>
    <property type="chains" value="C/D=1-83"/>
</dbReference>
<dbReference type="PDB" id="4H2X">
    <property type="method" value="X-ray"/>
    <property type="resolution" value="2.15 A"/>
    <property type="chains" value="C/D=1-83"/>
</dbReference>
<dbReference type="PDB" id="4H2Y">
    <property type="method" value="X-ray"/>
    <property type="resolution" value="2.10 A"/>
    <property type="chains" value="C/D=1-83"/>
</dbReference>
<dbReference type="PDBsum" id="2JQ4"/>
<dbReference type="PDBsum" id="4H2W"/>
<dbReference type="PDBsum" id="4H2X"/>
<dbReference type="PDBsum" id="4H2Y"/>
<dbReference type="BMRB" id="A9CHM9"/>
<dbReference type="SMR" id="A9CHM9"/>
<dbReference type="DIP" id="DIP-60154N"/>
<dbReference type="IntAct" id="A9CHM9">
    <property type="interactions" value="1"/>
</dbReference>
<dbReference type="STRING" id="176299.Atu2571"/>
<dbReference type="EnsemblBacteria" id="AAK88294">
    <property type="protein sequence ID" value="AAK88294"/>
    <property type="gene ID" value="Atu2571"/>
</dbReference>
<dbReference type="KEGG" id="atu:Atu2571"/>
<dbReference type="PATRIC" id="fig|176299.10.peg.2575"/>
<dbReference type="eggNOG" id="COG0236">
    <property type="taxonomic scope" value="Bacteria"/>
</dbReference>
<dbReference type="HOGENOM" id="CLU_108696_10_0_5"/>
<dbReference type="OrthoDB" id="7284767at2"/>
<dbReference type="BioCyc" id="AGRO:ATU2571-MONOMER"/>
<dbReference type="EvolutionaryTrace" id="A9CHM9"/>
<dbReference type="Proteomes" id="UP000000813">
    <property type="component" value="Chromosome circular"/>
</dbReference>
<dbReference type="Gene3D" id="1.10.1200.10">
    <property type="entry name" value="ACP-like"/>
    <property type="match status" value="1"/>
</dbReference>
<dbReference type="InterPro" id="IPR036736">
    <property type="entry name" value="ACP-like_sf"/>
</dbReference>
<dbReference type="InterPro" id="IPR009081">
    <property type="entry name" value="PP-bd_ACP"/>
</dbReference>
<dbReference type="NCBIfam" id="NF005480">
    <property type="entry name" value="PRK07081.1"/>
    <property type="match status" value="1"/>
</dbReference>
<dbReference type="Pfam" id="PF00550">
    <property type="entry name" value="PP-binding"/>
    <property type="match status" value="1"/>
</dbReference>
<dbReference type="SUPFAM" id="SSF47336">
    <property type="entry name" value="ACP-like"/>
    <property type="match status" value="1"/>
</dbReference>
<dbReference type="PROSITE" id="PS50075">
    <property type="entry name" value="CARRIER"/>
    <property type="match status" value="1"/>
</dbReference>
<organism>
    <name type="scientific">Agrobacterium fabrum (strain C58 / ATCC 33970)</name>
    <name type="common">Agrobacterium tumefaciens (strain C58)</name>
    <dbReference type="NCBI Taxonomy" id="176299"/>
    <lineage>
        <taxon>Bacteria</taxon>
        <taxon>Pseudomonadati</taxon>
        <taxon>Pseudomonadota</taxon>
        <taxon>Alphaproteobacteria</taxon>
        <taxon>Hyphomicrobiales</taxon>
        <taxon>Rhizobiaceae</taxon>
        <taxon>Rhizobium/Agrobacterium group</taxon>
        <taxon>Agrobacterium</taxon>
        <taxon>Agrobacterium tumefaciens complex</taxon>
    </lineage>
</organism>
<evidence type="ECO:0000255" key="1">
    <source>
        <dbReference type="PROSITE-ProRule" id="PRU00258"/>
    </source>
</evidence>
<evidence type="ECO:0000269" key="2">
    <source>
    </source>
</evidence>
<evidence type="ECO:0007829" key="3">
    <source>
        <dbReference type="PDB" id="2JQ4"/>
    </source>
</evidence>
<evidence type="ECO:0007829" key="4">
    <source>
        <dbReference type="PDB" id="4H2W"/>
    </source>
</evidence>
<evidence type="ECO:0007829" key="5">
    <source>
        <dbReference type="PDB" id="4H2Y"/>
    </source>
</evidence>
<protein>
    <recommendedName>
        <fullName>Aminoacyl carrier protein</fullName>
    </recommendedName>
</protein>